<organism>
    <name type="scientific">Schizosaccharomyces pombe (strain 972 / ATCC 24843)</name>
    <name type="common">Fission yeast</name>
    <dbReference type="NCBI Taxonomy" id="284812"/>
    <lineage>
        <taxon>Eukaryota</taxon>
        <taxon>Fungi</taxon>
        <taxon>Dikarya</taxon>
        <taxon>Ascomycota</taxon>
        <taxon>Taphrinomycotina</taxon>
        <taxon>Schizosaccharomycetes</taxon>
        <taxon>Schizosaccharomycetales</taxon>
        <taxon>Schizosaccharomycetaceae</taxon>
        <taxon>Schizosaccharomyces</taxon>
    </lineage>
</organism>
<evidence type="ECO:0000250" key="1">
    <source>
        <dbReference type="UniProtKB" id="P62707"/>
    </source>
</evidence>
<evidence type="ECO:0000269" key="2">
    <source>
    </source>
</evidence>
<evidence type="ECO:0000305" key="3"/>
<keyword id="KW-0963">Cytoplasm</keyword>
<keyword id="KW-0378">Hydrolase</keyword>
<keyword id="KW-0539">Nucleus</keyword>
<keyword id="KW-1185">Reference proteome</keyword>
<proteinExistence type="inferred from homology"/>
<dbReference type="EC" id="3.1.3.-"/>
<dbReference type="EMBL" id="CU329670">
    <property type="protein sequence ID" value="CAA22615.1"/>
    <property type="molecule type" value="Genomic_DNA"/>
</dbReference>
<dbReference type="PIR" id="T37764">
    <property type="entry name" value="T37764"/>
</dbReference>
<dbReference type="PIR" id="T50142">
    <property type="entry name" value="T50142"/>
</dbReference>
<dbReference type="RefSeq" id="NP_593140.1">
    <property type="nucleotide sequence ID" value="NM_001018536.2"/>
</dbReference>
<dbReference type="SMR" id="O94461"/>
<dbReference type="BioGRID" id="278770">
    <property type="interactions" value="16"/>
</dbReference>
<dbReference type="FunCoup" id="O94461">
    <property type="interactions" value="418"/>
</dbReference>
<dbReference type="STRING" id="284812.O94461"/>
<dbReference type="iPTMnet" id="O94461"/>
<dbReference type="PaxDb" id="4896-SPAC1687.21.1"/>
<dbReference type="EnsemblFungi" id="SPAC1687.21.1">
    <property type="protein sequence ID" value="SPAC1687.21.1:pep"/>
    <property type="gene ID" value="SPAC1687.21"/>
</dbReference>
<dbReference type="PomBase" id="SPAC1687.21"/>
<dbReference type="VEuPathDB" id="FungiDB:SPAC1687.21"/>
<dbReference type="eggNOG" id="KOG0235">
    <property type="taxonomic scope" value="Eukaryota"/>
</dbReference>
<dbReference type="HOGENOM" id="CLU_033323_9_2_1"/>
<dbReference type="InParanoid" id="O94461"/>
<dbReference type="OMA" id="DANNERW"/>
<dbReference type="PhylomeDB" id="O94461"/>
<dbReference type="PRO" id="PR:O94461"/>
<dbReference type="Proteomes" id="UP000002485">
    <property type="component" value="Chromosome I"/>
</dbReference>
<dbReference type="GO" id="GO:0005737">
    <property type="term" value="C:cytoplasm"/>
    <property type="evidence" value="ECO:0000318"/>
    <property type="project" value="GO_Central"/>
</dbReference>
<dbReference type="GO" id="GO:0005829">
    <property type="term" value="C:cytosol"/>
    <property type="evidence" value="ECO:0007005"/>
    <property type="project" value="PomBase"/>
</dbReference>
<dbReference type="GO" id="GO:0005634">
    <property type="term" value="C:nucleus"/>
    <property type="evidence" value="ECO:0007005"/>
    <property type="project" value="PomBase"/>
</dbReference>
<dbReference type="GO" id="GO:0004331">
    <property type="term" value="F:fructose-2,6-bisphosphate 2-phosphatase activity"/>
    <property type="evidence" value="ECO:0000266"/>
    <property type="project" value="PomBase"/>
</dbReference>
<dbReference type="GO" id="GO:0016791">
    <property type="term" value="F:phosphatase activity"/>
    <property type="evidence" value="ECO:0000318"/>
    <property type="project" value="GO_Central"/>
</dbReference>
<dbReference type="GO" id="GO:1905857">
    <property type="term" value="P:positive regulation of pentose-phosphate shunt"/>
    <property type="evidence" value="ECO:0000305"/>
    <property type="project" value="PomBase"/>
</dbReference>
<dbReference type="CDD" id="cd07067">
    <property type="entry name" value="HP_PGM_like"/>
    <property type="match status" value="1"/>
</dbReference>
<dbReference type="FunFam" id="3.40.50.1240:FF:000051">
    <property type="entry name" value="Phosphoglycerate mutase"/>
    <property type="match status" value="1"/>
</dbReference>
<dbReference type="Gene3D" id="3.40.50.1240">
    <property type="entry name" value="Phosphoglycerate mutase-like"/>
    <property type="match status" value="1"/>
</dbReference>
<dbReference type="InterPro" id="IPR013078">
    <property type="entry name" value="His_Pase_superF_clade-1"/>
</dbReference>
<dbReference type="InterPro" id="IPR029033">
    <property type="entry name" value="His_PPase_superfam"/>
</dbReference>
<dbReference type="InterPro" id="IPR001345">
    <property type="entry name" value="PG/BPGM_mutase_AS"/>
</dbReference>
<dbReference type="InterPro" id="IPR051695">
    <property type="entry name" value="Phosphoglycerate_Mutase"/>
</dbReference>
<dbReference type="PANTHER" id="PTHR46517">
    <property type="entry name" value="FRUCTOSE-2,6-BISPHOSPHATASE TIGAR"/>
    <property type="match status" value="1"/>
</dbReference>
<dbReference type="PANTHER" id="PTHR46517:SF1">
    <property type="entry name" value="FRUCTOSE-2,6-BISPHOSPHATASE TIGAR"/>
    <property type="match status" value="1"/>
</dbReference>
<dbReference type="Pfam" id="PF00300">
    <property type="entry name" value="His_Phos_1"/>
    <property type="match status" value="1"/>
</dbReference>
<dbReference type="SMART" id="SM00855">
    <property type="entry name" value="PGAM"/>
    <property type="match status" value="1"/>
</dbReference>
<dbReference type="SUPFAM" id="SSF53254">
    <property type="entry name" value="Phosphoglycerate mutase-like"/>
    <property type="match status" value="1"/>
</dbReference>
<dbReference type="PROSITE" id="PS00175">
    <property type="entry name" value="PG_MUTASE"/>
    <property type="match status" value="1"/>
</dbReference>
<accession>O94461</accession>
<comment type="subcellular location">
    <subcellularLocation>
        <location evidence="2">Cytoplasm</location>
    </subcellularLocation>
    <subcellularLocation>
        <location evidence="2">Nucleus</location>
    </subcellularLocation>
</comment>
<comment type="similarity">
    <text evidence="3">Belongs to the phosphoglycerate mutase family. BPG-dependent PGAM subfamily.</text>
</comment>
<name>YFFL_SCHPO</name>
<protein>
    <recommendedName>
        <fullName>Probable phosphatase C1687.21</fullName>
        <ecNumber>3.1.3.-</ecNumber>
    </recommendedName>
</protein>
<sequence length="209" mass="23698">MKVFLIRHGQTDQNKRGILQGSVDTNLNETGRLQAKLLAQRLLPLDIDQIFCSSMKRCRETIAPYLELKPEVPIVYTDLIRERVYGDLEGMNVVEAKKLLNANHPDHYGEGLSHLTSRLLKFWDEYVVPLQGKKKCVIVLCHGGVINVLRTHFMEEKGFTFDKSKLESKIITFNTSITEIEVTEHGTGHIHTFGDASHLESEETGKLIA</sequence>
<gene>
    <name type="ORF">SPAC1687.21</name>
    <name type="ORF">SPAC222.01</name>
</gene>
<feature type="chain" id="PRO_0000318490" description="Probable phosphatase C1687.21">
    <location>
        <begin position="1"/>
        <end position="209"/>
    </location>
</feature>
<feature type="active site" description="Tele-phosphohistidine intermediate" evidence="1">
    <location>
        <position position="8"/>
    </location>
</feature>
<feature type="active site" description="Proton donor/acceptor" evidence="1">
    <location>
        <position position="82"/>
    </location>
</feature>
<feature type="site" description="Transition state stabilizer" evidence="1">
    <location>
        <position position="142"/>
    </location>
</feature>
<reference key="1">
    <citation type="journal article" date="2002" name="Nature">
        <title>The genome sequence of Schizosaccharomyces pombe.</title>
        <authorList>
            <person name="Wood V."/>
            <person name="Gwilliam R."/>
            <person name="Rajandream M.A."/>
            <person name="Lyne M.H."/>
            <person name="Lyne R."/>
            <person name="Stewart A."/>
            <person name="Sgouros J.G."/>
            <person name="Peat N."/>
            <person name="Hayles J."/>
            <person name="Baker S.G."/>
            <person name="Basham D."/>
            <person name="Bowman S."/>
            <person name="Brooks K."/>
            <person name="Brown D."/>
            <person name="Brown S."/>
            <person name="Chillingworth T."/>
            <person name="Churcher C.M."/>
            <person name="Collins M."/>
            <person name="Connor R."/>
            <person name="Cronin A."/>
            <person name="Davis P."/>
            <person name="Feltwell T."/>
            <person name="Fraser A."/>
            <person name="Gentles S."/>
            <person name="Goble A."/>
            <person name="Hamlin N."/>
            <person name="Harris D.E."/>
            <person name="Hidalgo J."/>
            <person name="Hodgson G."/>
            <person name="Holroyd S."/>
            <person name="Hornsby T."/>
            <person name="Howarth S."/>
            <person name="Huckle E.J."/>
            <person name="Hunt S."/>
            <person name="Jagels K."/>
            <person name="James K.D."/>
            <person name="Jones L."/>
            <person name="Jones M."/>
            <person name="Leather S."/>
            <person name="McDonald S."/>
            <person name="McLean J."/>
            <person name="Mooney P."/>
            <person name="Moule S."/>
            <person name="Mungall K.L."/>
            <person name="Murphy L.D."/>
            <person name="Niblett D."/>
            <person name="Odell C."/>
            <person name="Oliver K."/>
            <person name="O'Neil S."/>
            <person name="Pearson D."/>
            <person name="Quail M.A."/>
            <person name="Rabbinowitsch E."/>
            <person name="Rutherford K.M."/>
            <person name="Rutter S."/>
            <person name="Saunders D."/>
            <person name="Seeger K."/>
            <person name="Sharp S."/>
            <person name="Skelton J."/>
            <person name="Simmonds M.N."/>
            <person name="Squares R."/>
            <person name="Squares S."/>
            <person name="Stevens K."/>
            <person name="Taylor K."/>
            <person name="Taylor R.G."/>
            <person name="Tivey A."/>
            <person name="Walsh S.V."/>
            <person name="Warren T."/>
            <person name="Whitehead S."/>
            <person name="Woodward J.R."/>
            <person name="Volckaert G."/>
            <person name="Aert R."/>
            <person name="Robben J."/>
            <person name="Grymonprez B."/>
            <person name="Weltjens I."/>
            <person name="Vanstreels E."/>
            <person name="Rieger M."/>
            <person name="Schaefer M."/>
            <person name="Mueller-Auer S."/>
            <person name="Gabel C."/>
            <person name="Fuchs M."/>
            <person name="Duesterhoeft A."/>
            <person name="Fritzc C."/>
            <person name="Holzer E."/>
            <person name="Moestl D."/>
            <person name="Hilbert H."/>
            <person name="Borzym K."/>
            <person name="Langer I."/>
            <person name="Beck A."/>
            <person name="Lehrach H."/>
            <person name="Reinhardt R."/>
            <person name="Pohl T.M."/>
            <person name="Eger P."/>
            <person name="Zimmermann W."/>
            <person name="Wedler H."/>
            <person name="Wambutt R."/>
            <person name="Purnelle B."/>
            <person name="Goffeau A."/>
            <person name="Cadieu E."/>
            <person name="Dreano S."/>
            <person name="Gloux S."/>
            <person name="Lelaure V."/>
            <person name="Mottier S."/>
            <person name="Galibert F."/>
            <person name="Aves S.J."/>
            <person name="Xiang Z."/>
            <person name="Hunt C."/>
            <person name="Moore K."/>
            <person name="Hurst S.M."/>
            <person name="Lucas M."/>
            <person name="Rochet M."/>
            <person name="Gaillardin C."/>
            <person name="Tallada V.A."/>
            <person name="Garzon A."/>
            <person name="Thode G."/>
            <person name="Daga R.R."/>
            <person name="Cruzado L."/>
            <person name="Jimenez J."/>
            <person name="Sanchez M."/>
            <person name="del Rey F."/>
            <person name="Benito J."/>
            <person name="Dominguez A."/>
            <person name="Revuelta J.L."/>
            <person name="Moreno S."/>
            <person name="Armstrong J."/>
            <person name="Forsburg S.L."/>
            <person name="Cerutti L."/>
            <person name="Lowe T."/>
            <person name="McCombie W.R."/>
            <person name="Paulsen I."/>
            <person name="Potashkin J."/>
            <person name="Shpakovski G.V."/>
            <person name="Ussery D."/>
            <person name="Barrell B.G."/>
            <person name="Nurse P."/>
        </authorList>
    </citation>
    <scope>NUCLEOTIDE SEQUENCE [LARGE SCALE GENOMIC DNA]</scope>
    <source>
        <strain>972 / ATCC 24843</strain>
    </source>
</reference>
<reference key="2">
    <citation type="journal article" date="2006" name="Nat. Biotechnol.">
        <title>ORFeome cloning and global analysis of protein localization in the fission yeast Schizosaccharomyces pombe.</title>
        <authorList>
            <person name="Matsuyama A."/>
            <person name="Arai R."/>
            <person name="Yashiroda Y."/>
            <person name="Shirai A."/>
            <person name="Kamata A."/>
            <person name="Sekido S."/>
            <person name="Kobayashi Y."/>
            <person name="Hashimoto A."/>
            <person name="Hamamoto M."/>
            <person name="Hiraoka Y."/>
            <person name="Horinouchi S."/>
            <person name="Yoshida M."/>
        </authorList>
    </citation>
    <scope>SUBCELLULAR LOCATION [LARGE SCALE ANALYSIS]</scope>
</reference>